<evidence type="ECO:0000255" key="1">
    <source>
        <dbReference type="HAMAP-Rule" id="MF_00255"/>
    </source>
</evidence>
<dbReference type="EC" id="6.1.1.14" evidence="1"/>
<dbReference type="EMBL" id="CP000880">
    <property type="protein sequence ID" value="ABX23776.1"/>
    <property type="molecule type" value="Genomic_DNA"/>
</dbReference>
<dbReference type="SMR" id="A9MLF8"/>
<dbReference type="STRING" id="41514.SARI_03982"/>
<dbReference type="KEGG" id="ses:SARI_03982"/>
<dbReference type="HOGENOM" id="CLU_007220_2_2_6"/>
<dbReference type="Proteomes" id="UP000002084">
    <property type="component" value="Chromosome"/>
</dbReference>
<dbReference type="GO" id="GO:0005829">
    <property type="term" value="C:cytosol"/>
    <property type="evidence" value="ECO:0007669"/>
    <property type="project" value="TreeGrafter"/>
</dbReference>
<dbReference type="GO" id="GO:0004814">
    <property type="term" value="F:arginine-tRNA ligase activity"/>
    <property type="evidence" value="ECO:0007669"/>
    <property type="project" value="InterPro"/>
</dbReference>
<dbReference type="GO" id="GO:0005524">
    <property type="term" value="F:ATP binding"/>
    <property type="evidence" value="ECO:0007669"/>
    <property type="project" value="UniProtKB-UniRule"/>
</dbReference>
<dbReference type="GO" id="GO:0004820">
    <property type="term" value="F:glycine-tRNA ligase activity"/>
    <property type="evidence" value="ECO:0007669"/>
    <property type="project" value="UniProtKB-UniRule"/>
</dbReference>
<dbReference type="GO" id="GO:0006420">
    <property type="term" value="P:arginyl-tRNA aminoacylation"/>
    <property type="evidence" value="ECO:0007669"/>
    <property type="project" value="InterPro"/>
</dbReference>
<dbReference type="GO" id="GO:0006426">
    <property type="term" value="P:glycyl-tRNA aminoacylation"/>
    <property type="evidence" value="ECO:0007669"/>
    <property type="project" value="UniProtKB-UniRule"/>
</dbReference>
<dbReference type="HAMAP" id="MF_00255">
    <property type="entry name" value="Gly_tRNA_synth_beta"/>
    <property type="match status" value="1"/>
</dbReference>
<dbReference type="InterPro" id="IPR008909">
    <property type="entry name" value="DALR_anticod-bd"/>
</dbReference>
<dbReference type="InterPro" id="IPR015944">
    <property type="entry name" value="Gly-tRNA-synth_bsu"/>
</dbReference>
<dbReference type="InterPro" id="IPR006194">
    <property type="entry name" value="Gly-tRNA-synth_heterodimer"/>
</dbReference>
<dbReference type="NCBIfam" id="TIGR00211">
    <property type="entry name" value="glyS"/>
    <property type="match status" value="1"/>
</dbReference>
<dbReference type="PANTHER" id="PTHR30075:SF2">
    <property type="entry name" value="GLYCINE--TRNA LIGASE, CHLOROPLASTIC_MITOCHONDRIAL 2"/>
    <property type="match status" value="1"/>
</dbReference>
<dbReference type="PANTHER" id="PTHR30075">
    <property type="entry name" value="GLYCYL-TRNA SYNTHETASE"/>
    <property type="match status" value="1"/>
</dbReference>
<dbReference type="Pfam" id="PF05746">
    <property type="entry name" value="DALR_1"/>
    <property type="match status" value="1"/>
</dbReference>
<dbReference type="Pfam" id="PF02092">
    <property type="entry name" value="tRNA_synt_2f"/>
    <property type="match status" value="1"/>
</dbReference>
<dbReference type="PRINTS" id="PR01045">
    <property type="entry name" value="TRNASYNTHGB"/>
</dbReference>
<dbReference type="SUPFAM" id="SSF109604">
    <property type="entry name" value="HD-domain/PDEase-like"/>
    <property type="match status" value="1"/>
</dbReference>
<dbReference type="PROSITE" id="PS50861">
    <property type="entry name" value="AA_TRNA_LIGASE_II_GLYAB"/>
    <property type="match status" value="1"/>
</dbReference>
<organism>
    <name type="scientific">Salmonella arizonae (strain ATCC BAA-731 / CDC346-86 / RSK2980)</name>
    <dbReference type="NCBI Taxonomy" id="41514"/>
    <lineage>
        <taxon>Bacteria</taxon>
        <taxon>Pseudomonadati</taxon>
        <taxon>Pseudomonadota</taxon>
        <taxon>Gammaproteobacteria</taxon>
        <taxon>Enterobacterales</taxon>
        <taxon>Enterobacteriaceae</taxon>
        <taxon>Salmonella</taxon>
    </lineage>
</organism>
<feature type="chain" id="PRO_1000078545" description="Glycine--tRNA ligase beta subunit">
    <location>
        <begin position="1"/>
        <end position="689"/>
    </location>
</feature>
<gene>
    <name evidence="1" type="primary">glyS</name>
    <name type="ordered locus">SARI_03982</name>
</gene>
<comment type="catalytic activity">
    <reaction evidence="1">
        <text>tRNA(Gly) + glycine + ATP = glycyl-tRNA(Gly) + AMP + diphosphate</text>
        <dbReference type="Rhea" id="RHEA:16013"/>
        <dbReference type="Rhea" id="RHEA-COMP:9664"/>
        <dbReference type="Rhea" id="RHEA-COMP:9683"/>
        <dbReference type="ChEBI" id="CHEBI:30616"/>
        <dbReference type="ChEBI" id="CHEBI:33019"/>
        <dbReference type="ChEBI" id="CHEBI:57305"/>
        <dbReference type="ChEBI" id="CHEBI:78442"/>
        <dbReference type="ChEBI" id="CHEBI:78522"/>
        <dbReference type="ChEBI" id="CHEBI:456215"/>
        <dbReference type="EC" id="6.1.1.14"/>
    </reaction>
</comment>
<comment type="subunit">
    <text evidence="1">Tetramer of two alpha and two beta subunits.</text>
</comment>
<comment type="subcellular location">
    <subcellularLocation>
        <location evidence="1">Cytoplasm</location>
    </subcellularLocation>
</comment>
<comment type="similarity">
    <text evidence="1">Belongs to the class-II aminoacyl-tRNA synthetase family.</text>
</comment>
<proteinExistence type="inferred from homology"/>
<name>SYGB_SALAR</name>
<keyword id="KW-0030">Aminoacyl-tRNA synthetase</keyword>
<keyword id="KW-0067">ATP-binding</keyword>
<keyword id="KW-0963">Cytoplasm</keyword>
<keyword id="KW-0436">Ligase</keyword>
<keyword id="KW-0547">Nucleotide-binding</keyword>
<keyword id="KW-0648">Protein biosynthesis</keyword>
<keyword id="KW-1185">Reference proteome</keyword>
<accession>A9MLF8</accession>
<protein>
    <recommendedName>
        <fullName evidence="1">Glycine--tRNA ligase beta subunit</fullName>
        <ecNumber evidence="1">6.1.1.14</ecNumber>
    </recommendedName>
    <alternativeName>
        <fullName evidence="1">Glycyl-tRNA synthetase beta subunit</fullName>
        <shortName evidence="1">GlyRS</shortName>
    </alternativeName>
</protein>
<reference key="1">
    <citation type="submission" date="2007-11" db="EMBL/GenBank/DDBJ databases">
        <authorList>
            <consortium name="The Salmonella enterica serovar Arizonae Genome Sequencing Project"/>
            <person name="McClelland M."/>
            <person name="Sanderson E.K."/>
            <person name="Porwollik S."/>
            <person name="Spieth J."/>
            <person name="Clifton W.S."/>
            <person name="Fulton R."/>
            <person name="Chunyan W."/>
            <person name="Wollam A."/>
            <person name="Shah N."/>
            <person name="Pepin K."/>
            <person name="Bhonagiri V."/>
            <person name="Nash W."/>
            <person name="Johnson M."/>
            <person name="Thiruvilangam P."/>
            <person name="Wilson R."/>
        </authorList>
    </citation>
    <scope>NUCLEOTIDE SEQUENCE [LARGE SCALE GENOMIC DNA]</scope>
    <source>
        <strain>ATCC BAA-731 / CDC346-86 / RSK2980</strain>
    </source>
</reference>
<sequence>MSEKTFLVEIGTEELPPKALRSLAESFAANFTAELDNAGLAHGKVEWFAAPRRLALKVANLAESQPDREVEKRGPAIAQAFDAEGKPSKAAEGWARGCGITVDQAERLKTDKGEWLLYRAHVKGESTEALVPNMVATSLAKLPIPKLMRWGASDVHFVRPVHTVTLLLGDNVIPATILGIQSDRVIRGHRFMGEPEFTIDTADQYPQILLERGKVIADYEARKAKIKADAEEAARKIGGNADLSESLLEEVASLVEWPVVLTAKFEEKFLAVPAEALVYTMKGDQKYFPVYDNAGKLLPNFIFVANIESTDPQQIISGNEKVVRPRLADAEFFFNTDRKKRLEDHLPRLQTVLFQQQLGTLRDKTDRIQALAGWIAGQIGADVNHATRAGLLSKCDLMTNMVFEFTDTQGVMGMHYARHDGEAEDVAVALNEQYQPRFAGDDLPSNPVACALAIADKMDTLAGIFGIGQHPKGDKDPFALRRAALGVLRIIVEKNLALDLQTLTEEAVRLYGDKLTNANVVDDVIDFMLGRFRAWYQDEGYTVDTIQAVLARRPTRPADFDARMKAVSHFRTLEEASALAAANKRVSNILAKATEPLNDIVHASVLKEAAEIELARHLVVLRDKLQPYFADGRYQEALIELAALRAPVDEFFENVMVNAEEKDIRINRLTLLSKLRELFLQVADISLLQ</sequence>